<name>MCPB_BOVIN</name>
<accession>P80343</accession>
<feature type="chain" id="PRO_0000144304" description="Monocyte chemotactic protein 1B">
    <location>
        <begin position="1" status="less than"/>
        <end position="74"/>
    </location>
</feature>
<feature type="disulfide bond" evidence="1">
    <location>
        <begin position="9"/>
        <end position="34"/>
    </location>
</feature>
<feature type="disulfide bond" evidence="1">
    <location>
        <begin position="10"/>
        <end position="50"/>
    </location>
</feature>
<feature type="non-terminal residue">
    <location>
        <position position="1"/>
    </location>
</feature>
<evidence type="ECO:0000250" key="1"/>
<evidence type="ECO:0000305" key="2"/>
<keyword id="KW-0145">Chemotaxis</keyword>
<keyword id="KW-0202">Cytokine</keyword>
<keyword id="KW-0903">Direct protein sequencing</keyword>
<keyword id="KW-1015">Disulfide bond</keyword>
<keyword id="KW-0358">Heparin-binding</keyword>
<keyword id="KW-1185">Reference proteome</keyword>
<proteinExistence type="evidence at protein level"/>
<dbReference type="PIR" id="A55984">
    <property type="entry name" value="A55984"/>
</dbReference>
<dbReference type="FunCoup" id="P80343">
    <property type="interactions" value="7"/>
</dbReference>
<dbReference type="InParanoid" id="P80343"/>
<dbReference type="Proteomes" id="UP000009136">
    <property type="component" value="Unplaced"/>
</dbReference>
<dbReference type="GO" id="GO:0005615">
    <property type="term" value="C:extracellular space"/>
    <property type="evidence" value="ECO:0000318"/>
    <property type="project" value="GO_Central"/>
</dbReference>
<dbReference type="GO" id="GO:0048020">
    <property type="term" value="F:CCR chemokine receptor binding"/>
    <property type="evidence" value="ECO:0000318"/>
    <property type="project" value="GO_Central"/>
</dbReference>
<dbReference type="GO" id="GO:0008009">
    <property type="term" value="F:chemokine activity"/>
    <property type="evidence" value="ECO:0000318"/>
    <property type="project" value="GO_Central"/>
</dbReference>
<dbReference type="GO" id="GO:0008201">
    <property type="term" value="F:heparin binding"/>
    <property type="evidence" value="ECO:0007669"/>
    <property type="project" value="UniProtKB-KW"/>
</dbReference>
<dbReference type="GO" id="GO:0061844">
    <property type="term" value="P:antimicrobial humoral immune response mediated by antimicrobial peptide"/>
    <property type="evidence" value="ECO:0000318"/>
    <property type="project" value="GO_Central"/>
</dbReference>
<dbReference type="GO" id="GO:0070098">
    <property type="term" value="P:chemokine-mediated signaling pathway"/>
    <property type="evidence" value="ECO:0000318"/>
    <property type="project" value="GO_Central"/>
</dbReference>
<dbReference type="GO" id="GO:0048245">
    <property type="term" value="P:eosinophil chemotaxis"/>
    <property type="evidence" value="ECO:0000318"/>
    <property type="project" value="GO_Central"/>
</dbReference>
<dbReference type="GO" id="GO:0006954">
    <property type="term" value="P:inflammatory response"/>
    <property type="evidence" value="ECO:0000318"/>
    <property type="project" value="GO_Central"/>
</dbReference>
<dbReference type="GO" id="GO:0030335">
    <property type="term" value="P:positive regulation of cell migration"/>
    <property type="evidence" value="ECO:0000318"/>
    <property type="project" value="GO_Central"/>
</dbReference>
<dbReference type="CDD" id="cd00272">
    <property type="entry name" value="Chemokine_CC"/>
    <property type="match status" value="1"/>
</dbReference>
<dbReference type="FunFam" id="2.40.50.40:FF:000002">
    <property type="entry name" value="C-C motif chemokine"/>
    <property type="match status" value="1"/>
</dbReference>
<dbReference type="Gene3D" id="2.40.50.40">
    <property type="match status" value="1"/>
</dbReference>
<dbReference type="InterPro" id="IPR039809">
    <property type="entry name" value="Chemokine_b/g/d"/>
</dbReference>
<dbReference type="InterPro" id="IPR000827">
    <property type="entry name" value="Chemokine_CC_CS"/>
</dbReference>
<dbReference type="InterPro" id="IPR001811">
    <property type="entry name" value="Chemokine_IL8-like_dom"/>
</dbReference>
<dbReference type="InterPro" id="IPR036048">
    <property type="entry name" value="Interleukin_8-like_sf"/>
</dbReference>
<dbReference type="PANTHER" id="PTHR12015:SF98">
    <property type="entry name" value="C-C MOTIF CHEMOKINE 2"/>
    <property type="match status" value="1"/>
</dbReference>
<dbReference type="PANTHER" id="PTHR12015">
    <property type="entry name" value="SMALL INDUCIBLE CYTOKINE A"/>
    <property type="match status" value="1"/>
</dbReference>
<dbReference type="Pfam" id="PF00048">
    <property type="entry name" value="IL8"/>
    <property type="match status" value="1"/>
</dbReference>
<dbReference type="SMART" id="SM00199">
    <property type="entry name" value="SCY"/>
    <property type="match status" value="1"/>
</dbReference>
<dbReference type="SUPFAM" id="SSF54117">
    <property type="entry name" value="Interleukin 8-like chemokines"/>
    <property type="match status" value="1"/>
</dbReference>
<dbReference type="PROSITE" id="PS00472">
    <property type="entry name" value="SMALL_CYTOKINES_CC"/>
    <property type="match status" value="1"/>
</dbReference>
<comment type="function">
    <text>Chemotactic factor that attracts monocytes, but not neutrophils. Augments monocyte anti-tumor activity. Also induces the release of gelatinase B. This protein can bind heparin.</text>
</comment>
<comment type="PTM">
    <text>The N-terminus is blocked.</text>
</comment>
<comment type="similarity">
    <text evidence="2">Belongs to the intercrine beta (chemokine CC) family.</text>
</comment>
<protein>
    <recommendedName>
        <fullName>Monocyte chemotactic protein 1B</fullName>
        <shortName>MCP-1B</shortName>
    </recommendedName>
</protein>
<organism>
    <name type="scientific">Bos taurus</name>
    <name type="common">Bovine</name>
    <dbReference type="NCBI Taxonomy" id="9913"/>
    <lineage>
        <taxon>Eukaryota</taxon>
        <taxon>Metazoa</taxon>
        <taxon>Chordata</taxon>
        <taxon>Craniata</taxon>
        <taxon>Vertebrata</taxon>
        <taxon>Euteleostomi</taxon>
        <taxon>Mammalia</taxon>
        <taxon>Eutheria</taxon>
        <taxon>Laurasiatheria</taxon>
        <taxon>Artiodactyla</taxon>
        <taxon>Ruminantia</taxon>
        <taxon>Pecora</taxon>
        <taxon>Bovidae</taxon>
        <taxon>Bovinae</taxon>
        <taxon>Bos</taxon>
    </lineage>
</organism>
<reference key="1">
    <citation type="journal article" date="1994" name="Biochemistry">
        <title>Purification, sequence analysis, and biological characterization of a second bovine monocyte chemotactic protein-1 (Bo MCP-1B).</title>
        <authorList>
            <person name="Proost P."/>
            <person name="Wuyts A."/>
            <person name="Lenaerts J.-P."/>
            <person name="van Damme J."/>
        </authorList>
    </citation>
    <scope>PROTEIN SEQUENCE</scope>
    <source>
        <tissue>Kidney</tissue>
    </source>
</reference>
<sequence length="74" mass="8363">DAINSPVTCCYTLTSKKISMQRLMSYRRVTSSKCPKEAVIFKTIAGKEICAEPKXXWVQDSISHLDKKNQXPKP</sequence>